<name>HEM6_XYLFA</name>
<dbReference type="EC" id="1.3.3.3" evidence="1"/>
<dbReference type="EMBL" id="AE003849">
    <property type="protein sequence ID" value="AAF82830.1"/>
    <property type="status" value="ALT_INIT"/>
    <property type="molecule type" value="Genomic_DNA"/>
</dbReference>
<dbReference type="PIR" id="H82858">
    <property type="entry name" value="H82858"/>
</dbReference>
<dbReference type="RefSeq" id="WP_010892566.1">
    <property type="nucleotide sequence ID" value="NC_002488.3"/>
</dbReference>
<dbReference type="SMR" id="Q9PHC7"/>
<dbReference type="STRING" id="160492.XF_0017"/>
<dbReference type="KEGG" id="xfa:XF_0017"/>
<dbReference type="PATRIC" id="fig|160492.11.peg.16"/>
<dbReference type="eggNOG" id="COG0408">
    <property type="taxonomic scope" value="Bacteria"/>
</dbReference>
<dbReference type="HOGENOM" id="CLU_026169_0_1_6"/>
<dbReference type="UniPathway" id="UPA00251">
    <property type="reaction ID" value="UER00322"/>
</dbReference>
<dbReference type="Proteomes" id="UP000000812">
    <property type="component" value="Chromosome"/>
</dbReference>
<dbReference type="GO" id="GO:0005737">
    <property type="term" value="C:cytoplasm"/>
    <property type="evidence" value="ECO:0007669"/>
    <property type="project" value="UniProtKB-SubCell"/>
</dbReference>
<dbReference type="GO" id="GO:0004109">
    <property type="term" value="F:coproporphyrinogen oxidase activity"/>
    <property type="evidence" value="ECO:0007669"/>
    <property type="project" value="UniProtKB-UniRule"/>
</dbReference>
<dbReference type="GO" id="GO:0046872">
    <property type="term" value="F:metal ion binding"/>
    <property type="evidence" value="ECO:0007669"/>
    <property type="project" value="UniProtKB-KW"/>
</dbReference>
<dbReference type="GO" id="GO:0042803">
    <property type="term" value="F:protein homodimerization activity"/>
    <property type="evidence" value="ECO:0000250"/>
    <property type="project" value="UniProtKB"/>
</dbReference>
<dbReference type="GO" id="GO:0006782">
    <property type="term" value="P:protoporphyrinogen IX biosynthetic process"/>
    <property type="evidence" value="ECO:0007669"/>
    <property type="project" value="UniProtKB-UniRule"/>
</dbReference>
<dbReference type="FunFam" id="3.40.1500.10:FF:000001">
    <property type="entry name" value="Oxygen-dependent coproporphyrinogen-III oxidase"/>
    <property type="match status" value="1"/>
</dbReference>
<dbReference type="Gene3D" id="3.40.1500.10">
    <property type="entry name" value="Coproporphyrinogen III oxidase, aerobic"/>
    <property type="match status" value="1"/>
</dbReference>
<dbReference type="HAMAP" id="MF_00333">
    <property type="entry name" value="Coprogen_oxidas"/>
    <property type="match status" value="1"/>
</dbReference>
<dbReference type="InterPro" id="IPR001260">
    <property type="entry name" value="Coprogen_oxidase_aer"/>
</dbReference>
<dbReference type="InterPro" id="IPR036406">
    <property type="entry name" value="Coprogen_oxidase_aer_sf"/>
</dbReference>
<dbReference type="InterPro" id="IPR018375">
    <property type="entry name" value="Coprogen_oxidase_CS"/>
</dbReference>
<dbReference type="NCBIfam" id="NF003727">
    <property type="entry name" value="PRK05330.1"/>
    <property type="match status" value="1"/>
</dbReference>
<dbReference type="PANTHER" id="PTHR10755">
    <property type="entry name" value="COPROPORPHYRINOGEN III OXIDASE, MITOCHONDRIAL"/>
    <property type="match status" value="1"/>
</dbReference>
<dbReference type="PANTHER" id="PTHR10755:SF0">
    <property type="entry name" value="OXYGEN-DEPENDENT COPROPORPHYRINOGEN-III OXIDASE, MITOCHONDRIAL"/>
    <property type="match status" value="1"/>
</dbReference>
<dbReference type="Pfam" id="PF01218">
    <property type="entry name" value="Coprogen_oxidas"/>
    <property type="match status" value="1"/>
</dbReference>
<dbReference type="PIRSF" id="PIRSF000166">
    <property type="entry name" value="Coproporphyri_ox"/>
    <property type="match status" value="1"/>
</dbReference>
<dbReference type="PRINTS" id="PR00073">
    <property type="entry name" value="COPRGNOXDASE"/>
</dbReference>
<dbReference type="SUPFAM" id="SSF102886">
    <property type="entry name" value="Coproporphyrinogen III oxidase"/>
    <property type="match status" value="1"/>
</dbReference>
<dbReference type="PROSITE" id="PS01021">
    <property type="entry name" value="COPROGEN_OXIDASE"/>
    <property type="match status" value="1"/>
</dbReference>
<organism>
    <name type="scientific">Xylella fastidiosa (strain 9a5c)</name>
    <dbReference type="NCBI Taxonomy" id="160492"/>
    <lineage>
        <taxon>Bacteria</taxon>
        <taxon>Pseudomonadati</taxon>
        <taxon>Pseudomonadota</taxon>
        <taxon>Gammaproteobacteria</taxon>
        <taxon>Lysobacterales</taxon>
        <taxon>Lysobacteraceae</taxon>
        <taxon>Xylella</taxon>
    </lineage>
</organism>
<evidence type="ECO:0000255" key="1">
    <source>
        <dbReference type="HAMAP-Rule" id="MF_00333"/>
    </source>
</evidence>
<evidence type="ECO:0000305" key="2"/>
<keyword id="KW-0963">Cytoplasm</keyword>
<keyword id="KW-0350">Heme biosynthesis</keyword>
<keyword id="KW-0479">Metal-binding</keyword>
<keyword id="KW-0560">Oxidoreductase</keyword>
<keyword id="KW-0627">Porphyrin biosynthesis</keyword>
<gene>
    <name evidence="1" type="primary">hemF</name>
    <name type="ordered locus">XF_0017</name>
</gene>
<sequence length="305" mass="35176">MSDFDRVRDYLTALQDRICNVVETIDGQSHFHEDHWQRTEGGGGRTRLLRDGAVFEQAGIGFSDVCGTHLPPSASVRRPELAGANWRACGVSLVFHPKNPFVPTTHLNVRYFRAERDGKQVAAWFGGGFDLTPFYPFDEDVVHWHTVARDLCAPFGDERYAAHKRWCDEYFVLRHRNETRGVGGLFFDDLDKDFERDFAYQRAVGDGFLDAYFPIVTRRHDTPYGDRERAFQLYRRGRYVEFNLLFDRGTLFGLQSGGRAESILISLPPLVRWEYGYHPLPGSAEARLADYLLPRDWLNESRICE</sequence>
<proteinExistence type="inferred from homology"/>
<comment type="function">
    <text evidence="1">Involved in the heme biosynthesis. Catalyzes the aerobic oxidative decarboxylation of propionate groups of rings A and B of coproporphyrinogen-III to yield the vinyl groups in protoporphyrinogen-IX.</text>
</comment>
<comment type="catalytic activity">
    <reaction evidence="1">
        <text>coproporphyrinogen III + O2 + 2 H(+) = protoporphyrinogen IX + 2 CO2 + 2 H2O</text>
        <dbReference type="Rhea" id="RHEA:18257"/>
        <dbReference type="ChEBI" id="CHEBI:15377"/>
        <dbReference type="ChEBI" id="CHEBI:15378"/>
        <dbReference type="ChEBI" id="CHEBI:15379"/>
        <dbReference type="ChEBI" id="CHEBI:16526"/>
        <dbReference type="ChEBI" id="CHEBI:57307"/>
        <dbReference type="ChEBI" id="CHEBI:57309"/>
        <dbReference type="EC" id="1.3.3.3"/>
    </reaction>
</comment>
<comment type="cofactor">
    <cofactor evidence="1">
        <name>a divalent metal cation</name>
        <dbReference type="ChEBI" id="CHEBI:60240"/>
    </cofactor>
</comment>
<comment type="pathway">
    <text evidence="1">Porphyrin-containing compound metabolism; protoporphyrin-IX biosynthesis; protoporphyrinogen-IX from coproporphyrinogen-III (O2 route): step 1/1.</text>
</comment>
<comment type="subunit">
    <text evidence="1">Homodimer.</text>
</comment>
<comment type="subcellular location">
    <subcellularLocation>
        <location evidence="1">Cytoplasm</location>
    </subcellularLocation>
</comment>
<comment type="similarity">
    <text evidence="1">Belongs to the aerobic coproporphyrinogen-III oxidase family.</text>
</comment>
<comment type="sequence caution" evidence="2">
    <conflict type="erroneous initiation">
        <sequence resource="EMBL-CDS" id="AAF82830"/>
    </conflict>
    <text>Extended N-terminus.</text>
</comment>
<protein>
    <recommendedName>
        <fullName evidence="1">Oxygen-dependent coproporphyrinogen-III oxidase</fullName>
        <shortName evidence="1">CPO</shortName>
        <shortName evidence="1">Coprogen oxidase</shortName>
        <shortName evidence="1">Coproporphyrinogenase</shortName>
        <ecNumber evidence="1">1.3.3.3</ecNumber>
    </recommendedName>
</protein>
<reference key="1">
    <citation type="journal article" date="2000" name="Nature">
        <title>The genome sequence of the plant pathogen Xylella fastidiosa.</title>
        <authorList>
            <person name="Simpson A.J.G."/>
            <person name="Reinach F.C."/>
            <person name="Arruda P."/>
            <person name="Abreu F.A."/>
            <person name="Acencio M."/>
            <person name="Alvarenga R."/>
            <person name="Alves L.M.C."/>
            <person name="Araya J.E."/>
            <person name="Baia G.S."/>
            <person name="Baptista C.S."/>
            <person name="Barros M.H."/>
            <person name="Bonaccorsi E.D."/>
            <person name="Bordin S."/>
            <person name="Bove J.M."/>
            <person name="Briones M.R.S."/>
            <person name="Bueno M.R.P."/>
            <person name="Camargo A.A."/>
            <person name="Camargo L.E.A."/>
            <person name="Carraro D.M."/>
            <person name="Carrer H."/>
            <person name="Colauto N.B."/>
            <person name="Colombo C."/>
            <person name="Costa F.F."/>
            <person name="Costa M.C.R."/>
            <person name="Costa-Neto C.M."/>
            <person name="Coutinho L.L."/>
            <person name="Cristofani M."/>
            <person name="Dias-Neto E."/>
            <person name="Docena C."/>
            <person name="El-Dorry H."/>
            <person name="Facincani A.P."/>
            <person name="Ferreira A.J.S."/>
            <person name="Ferreira V.C.A."/>
            <person name="Ferro J.A."/>
            <person name="Fraga J.S."/>
            <person name="Franca S.C."/>
            <person name="Franco M.C."/>
            <person name="Frohme M."/>
            <person name="Furlan L.R."/>
            <person name="Garnier M."/>
            <person name="Goldman G.H."/>
            <person name="Goldman M.H.S."/>
            <person name="Gomes S.L."/>
            <person name="Gruber A."/>
            <person name="Ho P.L."/>
            <person name="Hoheisel J.D."/>
            <person name="Junqueira M.L."/>
            <person name="Kemper E.L."/>
            <person name="Kitajima J.P."/>
            <person name="Krieger J.E."/>
            <person name="Kuramae E.E."/>
            <person name="Laigret F."/>
            <person name="Lambais M.R."/>
            <person name="Leite L.C.C."/>
            <person name="Lemos E.G.M."/>
            <person name="Lemos M.V.F."/>
            <person name="Lopes S.A."/>
            <person name="Lopes C.R."/>
            <person name="Machado J.A."/>
            <person name="Machado M.A."/>
            <person name="Madeira A.M.B.N."/>
            <person name="Madeira H.M.F."/>
            <person name="Marino C.L."/>
            <person name="Marques M.V."/>
            <person name="Martins E.A.L."/>
            <person name="Martins E.M.F."/>
            <person name="Matsukuma A.Y."/>
            <person name="Menck C.F.M."/>
            <person name="Miracca E.C."/>
            <person name="Miyaki C.Y."/>
            <person name="Monteiro-Vitorello C.B."/>
            <person name="Moon D.H."/>
            <person name="Nagai M.A."/>
            <person name="Nascimento A.L.T.O."/>
            <person name="Netto L.E.S."/>
            <person name="Nhani A. Jr."/>
            <person name="Nobrega F.G."/>
            <person name="Nunes L.R."/>
            <person name="Oliveira M.A."/>
            <person name="de Oliveira M.C."/>
            <person name="de Oliveira R.C."/>
            <person name="Palmieri D.A."/>
            <person name="Paris A."/>
            <person name="Peixoto B.R."/>
            <person name="Pereira G.A.G."/>
            <person name="Pereira H.A. Jr."/>
            <person name="Pesquero J.B."/>
            <person name="Quaggio R.B."/>
            <person name="Roberto P.G."/>
            <person name="Rodrigues V."/>
            <person name="de Rosa A.J.M."/>
            <person name="de Rosa V.E. Jr."/>
            <person name="de Sa R.G."/>
            <person name="Santelli R.V."/>
            <person name="Sawasaki H.E."/>
            <person name="da Silva A.C.R."/>
            <person name="da Silva A.M."/>
            <person name="da Silva F.R."/>
            <person name="Silva W.A. Jr."/>
            <person name="da Silveira J.F."/>
            <person name="Silvestri M.L.Z."/>
            <person name="Siqueira W.J."/>
            <person name="de Souza A.A."/>
            <person name="de Souza A.P."/>
            <person name="Terenzi M.F."/>
            <person name="Truffi D."/>
            <person name="Tsai S.M."/>
            <person name="Tsuhako M.H."/>
            <person name="Vallada H."/>
            <person name="Van Sluys M.A."/>
            <person name="Verjovski-Almeida S."/>
            <person name="Vettore A.L."/>
            <person name="Zago M.A."/>
            <person name="Zatz M."/>
            <person name="Meidanis J."/>
            <person name="Setubal J.C."/>
        </authorList>
    </citation>
    <scope>NUCLEOTIDE SEQUENCE [LARGE SCALE GENOMIC DNA]</scope>
    <source>
        <strain>9a5c</strain>
    </source>
</reference>
<feature type="chain" id="PRO_0000109933" description="Oxygen-dependent coproporphyrinogen-III oxidase">
    <location>
        <begin position="1"/>
        <end position="305"/>
    </location>
</feature>
<feature type="region of interest" description="Important for dimerization" evidence="1">
    <location>
        <begin position="239"/>
        <end position="274"/>
    </location>
</feature>
<feature type="active site" description="Proton donor" evidence="1">
    <location>
        <position position="106"/>
    </location>
</feature>
<feature type="binding site" evidence="1">
    <location>
        <position position="92"/>
    </location>
    <ligand>
        <name>substrate</name>
    </ligand>
</feature>
<feature type="binding site" evidence="1">
    <location>
        <position position="96"/>
    </location>
    <ligand>
        <name>a divalent metal cation</name>
        <dbReference type="ChEBI" id="CHEBI:60240"/>
    </ligand>
</feature>
<feature type="binding site" evidence="1">
    <location>
        <position position="106"/>
    </location>
    <ligand>
        <name>a divalent metal cation</name>
        <dbReference type="ChEBI" id="CHEBI:60240"/>
    </ligand>
</feature>
<feature type="binding site" evidence="1">
    <location>
        <begin position="108"/>
        <end position="110"/>
    </location>
    <ligand>
        <name>substrate</name>
    </ligand>
</feature>
<feature type="binding site" evidence="1">
    <location>
        <position position="145"/>
    </location>
    <ligand>
        <name>a divalent metal cation</name>
        <dbReference type="ChEBI" id="CHEBI:60240"/>
    </ligand>
</feature>
<feature type="binding site" evidence="1">
    <location>
        <position position="175"/>
    </location>
    <ligand>
        <name>a divalent metal cation</name>
        <dbReference type="ChEBI" id="CHEBI:60240"/>
    </ligand>
</feature>
<feature type="binding site" evidence="1">
    <location>
        <begin position="257"/>
        <end position="259"/>
    </location>
    <ligand>
        <name>substrate</name>
    </ligand>
</feature>
<feature type="site" description="Important for dimerization" evidence="1">
    <location>
        <position position="175"/>
    </location>
</feature>
<accession>Q9PHC7</accession>